<comment type="function">
    <text evidence="1">Joins adenosylcobinamide-GDP and alpha-ribazole to generate adenosylcobalamin (Ado-cobalamin). Also synthesizes adenosylcobalamin 5'-phosphate from adenosylcobinamide-GDP and alpha-ribazole 5'-phosphate.</text>
</comment>
<comment type="catalytic activity">
    <reaction evidence="1">
        <text>alpha-ribazole + adenosylcob(III)inamide-GDP = adenosylcob(III)alamin + GMP + H(+)</text>
        <dbReference type="Rhea" id="RHEA:16049"/>
        <dbReference type="ChEBI" id="CHEBI:10329"/>
        <dbReference type="ChEBI" id="CHEBI:15378"/>
        <dbReference type="ChEBI" id="CHEBI:18408"/>
        <dbReference type="ChEBI" id="CHEBI:58115"/>
        <dbReference type="ChEBI" id="CHEBI:60487"/>
        <dbReference type="EC" id="2.7.8.26"/>
    </reaction>
</comment>
<comment type="catalytic activity">
    <reaction evidence="1">
        <text>alpha-ribazole 5'-phosphate + adenosylcob(III)inamide-GDP = adenosylcob(III)alamin 5'-phosphate + GMP + H(+)</text>
        <dbReference type="Rhea" id="RHEA:23560"/>
        <dbReference type="ChEBI" id="CHEBI:15378"/>
        <dbReference type="ChEBI" id="CHEBI:57918"/>
        <dbReference type="ChEBI" id="CHEBI:58115"/>
        <dbReference type="ChEBI" id="CHEBI:60487"/>
        <dbReference type="ChEBI" id="CHEBI:60493"/>
        <dbReference type="EC" id="2.7.8.26"/>
    </reaction>
</comment>
<comment type="cofactor">
    <cofactor evidence="1">
        <name>Mg(2+)</name>
        <dbReference type="ChEBI" id="CHEBI:18420"/>
    </cofactor>
</comment>
<comment type="pathway">
    <text evidence="1">Cofactor biosynthesis; adenosylcobalamin biosynthesis; adenosylcobalamin from cob(II)yrinate a,c-diamide: step 7/7.</text>
</comment>
<comment type="subcellular location">
    <subcellularLocation>
        <location evidence="1">Cell inner membrane</location>
        <topology evidence="1">Multi-pass membrane protein</topology>
    </subcellularLocation>
</comment>
<comment type="similarity">
    <text evidence="1">Belongs to the CobS family.</text>
</comment>
<feature type="chain" id="PRO_1000072780" description="Adenosylcobinamide-GDP ribazoletransferase">
    <location>
        <begin position="1"/>
        <end position="261"/>
    </location>
</feature>
<feature type="transmembrane region" description="Helical" evidence="1">
    <location>
        <begin position="9"/>
        <end position="29"/>
    </location>
</feature>
<feature type="transmembrane region" description="Helical" evidence="1">
    <location>
        <begin position="41"/>
        <end position="61"/>
    </location>
</feature>
<feature type="transmembrane region" description="Helical" evidence="1">
    <location>
        <begin position="64"/>
        <end position="84"/>
    </location>
</feature>
<feature type="transmembrane region" description="Helical" evidence="1">
    <location>
        <begin position="114"/>
        <end position="134"/>
    </location>
</feature>
<feature type="transmembrane region" description="Helical" evidence="1">
    <location>
        <begin position="141"/>
        <end position="161"/>
    </location>
</feature>
<feature type="transmembrane region" description="Helical" evidence="1">
    <location>
        <begin position="196"/>
        <end position="216"/>
    </location>
</feature>
<feature type="transmembrane region" description="Helical" evidence="1">
    <location>
        <begin position="235"/>
        <end position="255"/>
    </location>
</feature>
<keyword id="KW-0997">Cell inner membrane</keyword>
<keyword id="KW-1003">Cell membrane</keyword>
<keyword id="KW-0169">Cobalamin biosynthesis</keyword>
<keyword id="KW-0460">Magnesium</keyword>
<keyword id="KW-0472">Membrane</keyword>
<keyword id="KW-0808">Transferase</keyword>
<keyword id="KW-0812">Transmembrane</keyword>
<keyword id="KW-1133">Transmembrane helix</keyword>
<proteinExistence type="inferred from homology"/>
<reference key="1">
    <citation type="submission" date="2007-03" db="EMBL/GenBank/DDBJ databases">
        <authorList>
            <person name="Heidelberg J."/>
        </authorList>
    </citation>
    <scope>NUCLEOTIDE SEQUENCE [LARGE SCALE GENOMIC DNA]</scope>
    <source>
        <strain>ATCC 39541 / Classical Ogawa 395 / O395</strain>
    </source>
</reference>
<reference key="2">
    <citation type="journal article" date="2008" name="PLoS ONE">
        <title>A recalibrated molecular clock and independent origins for the cholera pandemic clones.</title>
        <authorList>
            <person name="Feng L."/>
            <person name="Reeves P.R."/>
            <person name="Lan R."/>
            <person name="Ren Y."/>
            <person name="Gao C."/>
            <person name="Zhou Z."/>
            <person name="Ren Y."/>
            <person name="Cheng J."/>
            <person name="Wang W."/>
            <person name="Wang J."/>
            <person name="Qian W."/>
            <person name="Li D."/>
            <person name="Wang L."/>
        </authorList>
    </citation>
    <scope>NUCLEOTIDE SEQUENCE [LARGE SCALE GENOMIC DNA]</scope>
    <source>
        <strain>ATCC 39541 / Classical Ogawa 395 / O395</strain>
    </source>
</reference>
<organism>
    <name type="scientific">Vibrio cholerae serotype O1 (strain ATCC 39541 / Classical Ogawa 395 / O395)</name>
    <dbReference type="NCBI Taxonomy" id="345073"/>
    <lineage>
        <taxon>Bacteria</taxon>
        <taxon>Pseudomonadati</taxon>
        <taxon>Pseudomonadota</taxon>
        <taxon>Gammaproteobacteria</taxon>
        <taxon>Vibrionales</taxon>
        <taxon>Vibrionaceae</taxon>
        <taxon>Vibrio</taxon>
    </lineage>
</organism>
<evidence type="ECO:0000255" key="1">
    <source>
        <dbReference type="HAMAP-Rule" id="MF_00719"/>
    </source>
</evidence>
<gene>
    <name evidence="1" type="primary">cobS</name>
    <name type="ordered locus">VC0395_A0860</name>
    <name type="ordered locus">VC395_1357</name>
</gene>
<accession>A5F1U5</accession>
<accession>C3LZZ9</accession>
<protein>
    <recommendedName>
        <fullName evidence="1">Adenosylcobinamide-GDP ribazoletransferase</fullName>
        <ecNumber evidence="1">2.7.8.26</ecNumber>
    </recommendedName>
    <alternativeName>
        <fullName evidence="1">Cobalamin synthase</fullName>
    </alternativeName>
    <alternativeName>
        <fullName evidence="1">Cobalamin-5'-phosphate synthase</fullName>
    </alternativeName>
</protein>
<name>COBS_VIBC3</name>
<sequence length="261" mass="28593">MAAILRYQLELFLLAVSFFSRIPVPVSLPYSSERMNQAGRYFALVGLLLGAICALVYSLATQLFSTNISVFLTMVLSLLLTGAFHEDGLADMADGVGGGMTAERRLEIMKDSRIGTYGSSALIMVLLGKYLLLTELADLTSLVPVWLLAYTLSRAVAASLIRNTPYVSDTDSSKSKPLAQQLSGTDVAVLSLTALATLLYFSWQFIGVMIAASLIFRQIFRQWLIRRLGGFTGDCLGAAQQLMEILIYLILLAFLQHEVMI</sequence>
<dbReference type="EC" id="2.7.8.26" evidence="1"/>
<dbReference type="EMBL" id="CP000627">
    <property type="protein sequence ID" value="ABQ20564.1"/>
    <property type="molecule type" value="Genomic_DNA"/>
</dbReference>
<dbReference type="EMBL" id="CP001235">
    <property type="protein sequence ID" value="ACP09365.1"/>
    <property type="molecule type" value="Genomic_DNA"/>
</dbReference>
<dbReference type="RefSeq" id="WP_000718969.1">
    <property type="nucleotide sequence ID" value="NZ_JAACZH010000002.1"/>
</dbReference>
<dbReference type="KEGG" id="vco:VC0395_A0860"/>
<dbReference type="KEGG" id="vcr:VC395_1357"/>
<dbReference type="PATRIC" id="fig|345073.21.peg.1319"/>
<dbReference type="eggNOG" id="COG0368">
    <property type="taxonomic scope" value="Bacteria"/>
</dbReference>
<dbReference type="HOGENOM" id="CLU_057426_1_1_6"/>
<dbReference type="OrthoDB" id="9794626at2"/>
<dbReference type="UniPathway" id="UPA00148">
    <property type="reaction ID" value="UER00238"/>
</dbReference>
<dbReference type="Proteomes" id="UP000000249">
    <property type="component" value="Chromosome 2"/>
</dbReference>
<dbReference type="GO" id="GO:0005886">
    <property type="term" value="C:plasma membrane"/>
    <property type="evidence" value="ECO:0007669"/>
    <property type="project" value="UniProtKB-SubCell"/>
</dbReference>
<dbReference type="GO" id="GO:0051073">
    <property type="term" value="F:adenosylcobinamide-GDP ribazoletransferase activity"/>
    <property type="evidence" value="ECO:0007669"/>
    <property type="project" value="UniProtKB-UniRule"/>
</dbReference>
<dbReference type="GO" id="GO:0008818">
    <property type="term" value="F:cobalamin 5'-phosphate synthase activity"/>
    <property type="evidence" value="ECO:0007669"/>
    <property type="project" value="UniProtKB-UniRule"/>
</dbReference>
<dbReference type="GO" id="GO:0009236">
    <property type="term" value="P:cobalamin biosynthetic process"/>
    <property type="evidence" value="ECO:0007669"/>
    <property type="project" value="UniProtKB-UniRule"/>
</dbReference>
<dbReference type="HAMAP" id="MF_00719">
    <property type="entry name" value="CobS"/>
    <property type="match status" value="1"/>
</dbReference>
<dbReference type="InterPro" id="IPR003805">
    <property type="entry name" value="CobS"/>
</dbReference>
<dbReference type="NCBIfam" id="TIGR00317">
    <property type="entry name" value="cobS"/>
    <property type="match status" value="1"/>
</dbReference>
<dbReference type="NCBIfam" id="NF001277">
    <property type="entry name" value="PRK00235.1-3"/>
    <property type="match status" value="1"/>
</dbReference>
<dbReference type="PANTHER" id="PTHR34148">
    <property type="entry name" value="ADENOSYLCOBINAMIDE-GDP RIBAZOLETRANSFERASE"/>
    <property type="match status" value="1"/>
</dbReference>
<dbReference type="PANTHER" id="PTHR34148:SF1">
    <property type="entry name" value="ADENOSYLCOBINAMIDE-GDP RIBAZOLETRANSFERASE"/>
    <property type="match status" value="1"/>
</dbReference>
<dbReference type="Pfam" id="PF02654">
    <property type="entry name" value="CobS"/>
    <property type="match status" value="1"/>
</dbReference>